<feature type="chain" id="PRO_0000100555" description="Phosphoribosylformylglycinamidine synthase subunit PurQ">
    <location>
        <begin position="1"/>
        <end position="232"/>
    </location>
</feature>
<feature type="domain" description="Glutamine amidotransferase type-1" evidence="1">
    <location>
        <begin position="3"/>
        <end position="232"/>
    </location>
</feature>
<feature type="active site" description="Nucleophile" evidence="1">
    <location>
        <position position="86"/>
    </location>
</feature>
<feature type="active site" evidence="1">
    <location>
        <position position="203"/>
    </location>
</feature>
<feature type="active site" evidence="1">
    <location>
        <position position="205"/>
    </location>
</feature>
<dbReference type="EC" id="6.3.5.3" evidence="1"/>
<dbReference type="EC" id="3.5.1.2" evidence="1"/>
<dbReference type="EMBL" id="BA000045">
    <property type="protein sequence ID" value="BAC89266.1"/>
    <property type="molecule type" value="Genomic_DNA"/>
</dbReference>
<dbReference type="RefSeq" id="NP_924271.1">
    <property type="nucleotide sequence ID" value="NC_005125.1"/>
</dbReference>
<dbReference type="RefSeq" id="WP_011141325.1">
    <property type="nucleotide sequence ID" value="NC_005125.1"/>
</dbReference>
<dbReference type="SMR" id="Q7NL01"/>
<dbReference type="FunCoup" id="Q7NL01">
    <property type="interactions" value="30"/>
</dbReference>
<dbReference type="STRING" id="251221.gene:10758808"/>
<dbReference type="EnsemblBacteria" id="BAC89266">
    <property type="protein sequence ID" value="BAC89266"/>
    <property type="gene ID" value="BAC89266"/>
</dbReference>
<dbReference type="KEGG" id="gvi:glr1325"/>
<dbReference type="PATRIC" id="fig|251221.4.peg.1352"/>
<dbReference type="eggNOG" id="COG0047">
    <property type="taxonomic scope" value="Bacteria"/>
</dbReference>
<dbReference type="HOGENOM" id="CLU_001031_3_1_3"/>
<dbReference type="InParanoid" id="Q7NL01"/>
<dbReference type="OrthoDB" id="9804441at2"/>
<dbReference type="PhylomeDB" id="Q7NL01"/>
<dbReference type="UniPathway" id="UPA00074">
    <property type="reaction ID" value="UER00128"/>
</dbReference>
<dbReference type="Proteomes" id="UP000000557">
    <property type="component" value="Chromosome"/>
</dbReference>
<dbReference type="GO" id="GO:0005737">
    <property type="term" value="C:cytoplasm"/>
    <property type="evidence" value="ECO:0007669"/>
    <property type="project" value="UniProtKB-SubCell"/>
</dbReference>
<dbReference type="GO" id="GO:0005524">
    <property type="term" value="F:ATP binding"/>
    <property type="evidence" value="ECO:0007669"/>
    <property type="project" value="UniProtKB-KW"/>
</dbReference>
<dbReference type="GO" id="GO:0004359">
    <property type="term" value="F:glutaminase activity"/>
    <property type="evidence" value="ECO:0007669"/>
    <property type="project" value="UniProtKB-EC"/>
</dbReference>
<dbReference type="GO" id="GO:0004642">
    <property type="term" value="F:phosphoribosylformylglycinamidine synthase activity"/>
    <property type="evidence" value="ECO:0007669"/>
    <property type="project" value="UniProtKB-UniRule"/>
</dbReference>
<dbReference type="GO" id="GO:0006189">
    <property type="term" value="P:'de novo' IMP biosynthetic process"/>
    <property type="evidence" value="ECO:0007669"/>
    <property type="project" value="UniProtKB-UniRule"/>
</dbReference>
<dbReference type="CDD" id="cd01740">
    <property type="entry name" value="GATase1_FGAR_AT"/>
    <property type="match status" value="1"/>
</dbReference>
<dbReference type="Gene3D" id="3.40.50.880">
    <property type="match status" value="1"/>
</dbReference>
<dbReference type="HAMAP" id="MF_00421">
    <property type="entry name" value="PurQ"/>
    <property type="match status" value="1"/>
</dbReference>
<dbReference type="InterPro" id="IPR029062">
    <property type="entry name" value="Class_I_gatase-like"/>
</dbReference>
<dbReference type="InterPro" id="IPR010075">
    <property type="entry name" value="PRibForGlyAmidine_synth_PurQ"/>
</dbReference>
<dbReference type="NCBIfam" id="TIGR01737">
    <property type="entry name" value="FGAM_synth_I"/>
    <property type="match status" value="1"/>
</dbReference>
<dbReference type="NCBIfam" id="NF002957">
    <property type="entry name" value="PRK03619.1"/>
    <property type="match status" value="1"/>
</dbReference>
<dbReference type="PANTHER" id="PTHR47552">
    <property type="entry name" value="PHOSPHORIBOSYLFORMYLGLYCINAMIDINE SYNTHASE SUBUNIT PURQ"/>
    <property type="match status" value="1"/>
</dbReference>
<dbReference type="PANTHER" id="PTHR47552:SF1">
    <property type="entry name" value="PHOSPHORIBOSYLFORMYLGLYCINAMIDINE SYNTHASE SUBUNIT PURQ"/>
    <property type="match status" value="1"/>
</dbReference>
<dbReference type="Pfam" id="PF13507">
    <property type="entry name" value="GATase_5"/>
    <property type="match status" value="1"/>
</dbReference>
<dbReference type="PIRSF" id="PIRSF001586">
    <property type="entry name" value="FGAM_synth_I"/>
    <property type="match status" value="1"/>
</dbReference>
<dbReference type="SMART" id="SM01211">
    <property type="entry name" value="GATase_5"/>
    <property type="match status" value="1"/>
</dbReference>
<dbReference type="SUPFAM" id="SSF52317">
    <property type="entry name" value="Class I glutamine amidotransferase-like"/>
    <property type="match status" value="1"/>
</dbReference>
<dbReference type="PROSITE" id="PS51273">
    <property type="entry name" value="GATASE_TYPE_1"/>
    <property type="match status" value="1"/>
</dbReference>
<evidence type="ECO:0000255" key="1">
    <source>
        <dbReference type="HAMAP-Rule" id="MF_00421"/>
    </source>
</evidence>
<comment type="function">
    <text evidence="1">Part of the phosphoribosylformylglycinamidine synthase complex involved in the purines biosynthetic pathway. Catalyzes the ATP-dependent conversion of formylglycinamide ribonucleotide (FGAR) and glutamine to yield formylglycinamidine ribonucleotide (FGAM) and glutamate. The FGAM synthase complex is composed of three subunits. PurQ produces an ammonia molecule by converting glutamine to glutamate. PurL transfers the ammonia molecule to FGAR to form FGAM in an ATP-dependent manner. PurS interacts with PurQ and PurL and is thought to assist in the transfer of the ammonia molecule from PurQ to PurL.</text>
</comment>
<comment type="catalytic activity">
    <reaction evidence="1">
        <text>N(2)-formyl-N(1)-(5-phospho-beta-D-ribosyl)glycinamide + L-glutamine + ATP + H2O = 2-formamido-N(1)-(5-O-phospho-beta-D-ribosyl)acetamidine + L-glutamate + ADP + phosphate + H(+)</text>
        <dbReference type="Rhea" id="RHEA:17129"/>
        <dbReference type="ChEBI" id="CHEBI:15377"/>
        <dbReference type="ChEBI" id="CHEBI:15378"/>
        <dbReference type="ChEBI" id="CHEBI:29985"/>
        <dbReference type="ChEBI" id="CHEBI:30616"/>
        <dbReference type="ChEBI" id="CHEBI:43474"/>
        <dbReference type="ChEBI" id="CHEBI:58359"/>
        <dbReference type="ChEBI" id="CHEBI:147286"/>
        <dbReference type="ChEBI" id="CHEBI:147287"/>
        <dbReference type="ChEBI" id="CHEBI:456216"/>
        <dbReference type="EC" id="6.3.5.3"/>
    </reaction>
</comment>
<comment type="catalytic activity">
    <reaction evidence="1">
        <text>L-glutamine + H2O = L-glutamate + NH4(+)</text>
        <dbReference type="Rhea" id="RHEA:15889"/>
        <dbReference type="ChEBI" id="CHEBI:15377"/>
        <dbReference type="ChEBI" id="CHEBI:28938"/>
        <dbReference type="ChEBI" id="CHEBI:29985"/>
        <dbReference type="ChEBI" id="CHEBI:58359"/>
        <dbReference type="EC" id="3.5.1.2"/>
    </reaction>
</comment>
<comment type="pathway">
    <text evidence="1">Purine metabolism; IMP biosynthesis via de novo pathway; 5-amino-1-(5-phospho-D-ribosyl)imidazole from N(2)-formyl-N(1)-(5-phospho-D-ribosyl)glycinamide: step 1/2.</text>
</comment>
<comment type="subunit">
    <text evidence="1">Part of the FGAM synthase complex composed of 1 PurL, 1 PurQ and 2 PurS subunits.</text>
</comment>
<comment type="subcellular location">
    <subcellularLocation>
        <location evidence="1">Cytoplasm</location>
    </subcellularLocation>
</comment>
<reference key="1">
    <citation type="journal article" date="2003" name="DNA Res.">
        <title>Complete genome structure of Gloeobacter violaceus PCC 7421, a cyanobacterium that lacks thylakoids.</title>
        <authorList>
            <person name="Nakamura Y."/>
            <person name="Kaneko T."/>
            <person name="Sato S."/>
            <person name="Mimuro M."/>
            <person name="Miyashita H."/>
            <person name="Tsuchiya T."/>
            <person name="Sasamoto S."/>
            <person name="Watanabe A."/>
            <person name="Kawashima K."/>
            <person name="Kishida Y."/>
            <person name="Kiyokawa C."/>
            <person name="Kohara M."/>
            <person name="Matsumoto M."/>
            <person name="Matsuno A."/>
            <person name="Nakazaki N."/>
            <person name="Shimpo S."/>
            <person name="Takeuchi C."/>
            <person name="Yamada M."/>
            <person name="Tabata S."/>
        </authorList>
    </citation>
    <scope>NUCLEOTIDE SEQUENCE [LARGE SCALE GENOMIC DNA]</scope>
    <source>
        <strain>ATCC 29082 / PCC 7421</strain>
    </source>
</reference>
<sequence length="232" mass="25255">MKFAVIVFPGSNCDRDVVTVTRGLLDQPTRLVWHTEDDLDGCDVAVIPGGFSYGDYLRCGAIARFSPVMQAVRRHAERGGLVIGICNGFQVLTEAGLLPGALVRNRDLQFVCDRVALKVERTDLPWVHSYRPGEVITLPIAHGEGCYYAEEATLAELEENRQVVFRYCRPDGTIDAVGNPNGSLHNIAGLCNRHGNVLGMMPHPERASDPILGGSDGRRLFESLVASALAVV</sequence>
<name>PURQ_GLOVI</name>
<proteinExistence type="inferred from homology"/>
<keyword id="KW-0067">ATP-binding</keyword>
<keyword id="KW-0963">Cytoplasm</keyword>
<keyword id="KW-0315">Glutamine amidotransferase</keyword>
<keyword id="KW-0378">Hydrolase</keyword>
<keyword id="KW-0436">Ligase</keyword>
<keyword id="KW-0547">Nucleotide-binding</keyword>
<keyword id="KW-0658">Purine biosynthesis</keyword>
<keyword id="KW-1185">Reference proteome</keyword>
<organism>
    <name type="scientific">Gloeobacter violaceus (strain ATCC 29082 / PCC 7421)</name>
    <dbReference type="NCBI Taxonomy" id="251221"/>
    <lineage>
        <taxon>Bacteria</taxon>
        <taxon>Bacillati</taxon>
        <taxon>Cyanobacteriota</taxon>
        <taxon>Cyanophyceae</taxon>
        <taxon>Gloeobacterales</taxon>
        <taxon>Gloeobacteraceae</taxon>
        <taxon>Gloeobacter</taxon>
    </lineage>
</organism>
<protein>
    <recommendedName>
        <fullName evidence="1">Phosphoribosylformylglycinamidine synthase subunit PurQ</fullName>
        <shortName evidence="1">FGAM synthase</shortName>
        <ecNumber evidence="1">6.3.5.3</ecNumber>
    </recommendedName>
    <alternativeName>
        <fullName evidence="1">Formylglycinamide ribonucleotide amidotransferase subunit I</fullName>
        <shortName evidence="1">FGAR amidotransferase I</shortName>
        <shortName evidence="1">FGAR-AT I</shortName>
    </alternativeName>
    <alternativeName>
        <fullName evidence="1">Glutaminase PurQ</fullName>
        <ecNumber evidence="1">3.5.1.2</ecNumber>
    </alternativeName>
    <alternativeName>
        <fullName evidence="1">Phosphoribosylformylglycinamidine synthase subunit I</fullName>
    </alternativeName>
</protein>
<accession>Q7NL01</accession>
<gene>
    <name evidence="1" type="primary">purQ</name>
    <name type="ordered locus">glr1325</name>
</gene>